<reference key="1">
    <citation type="journal article" date="2003" name="Nucleic Acids Res.">
        <title>Genome sequence of Chlamydophila caviae (Chlamydia psittaci GPIC): examining the role of niche-specific genes in the evolution of the Chlamydiaceae.</title>
        <authorList>
            <person name="Read T.D."/>
            <person name="Myers G.S.A."/>
            <person name="Brunham R.C."/>
            <person name="Nelson W.C."/>
            <person name="Paulsen I.T."/>
            <person name="Heidelberg J.F."/>
            <person name="Holtzapple E.K."/>
            <person name="Khouri H.M."/>
            <person name="Federova N.B."/>
            <person name="Carty H.A."/>
            <person name="Umayam L.A."/>
            <person name="Haft D.H."/>
            <person name="Peterson J.D."/>
            <person name="Beanan M.J."/>
            <person name="White O."/>
            <person name="Salzberg S.L."/>
            <person name="Hsia R.-C."/>
            <person name="McClarty G."/>
            <person name="Rank R.G."/>
            <person name="Bavoil P.M."/>
            <person name="Fraser C.M."/>
        </authorList>
    </citation>
    <scope>NUCLEOTIDE SEQUENCE [LARGE SCALE GENOMIC DNA]</scope>
    <source>
        <strain>ATCC VR-813 / DSM 19441 / 03DC25 / GPIC</strain>
    </source>
</reference>
<proteinExistence type="inferred from homology"/>
<dbReference type="EC" id="2.7.7.38" evidence="1"/>
<dbReference type="EMBL" id="AE015925">
    <property type="protein sequence ID" value="AAP05338.1"/>
    <property type="molecule type" value="Genomic_DNA"/>
</dbReference>
<dbReference type="RefSeq" id="WP_011006553.1">
    <property type="nucleotide sequence ID" value="NC_003361.3"/>
</dbReference>
<dbReference type="SMR" id="Q822T3"/>
<dbReference type="STRING" id="227941.CCA_00596"/>
<dbReference type="KEGG" id="cca:CCA_00596"/>
<dbReference type="eggNOG" id="COG1212">
    <property type="taxonomic scope" value="Bacteria"/>
</dbReference>
<dbReference type="HOGENOM" id="CLU_065038_0_1_0"/>
<dbReference type="OrthoDB" id="9815559at2"/>
<dbReference type="UniPathway" id="UPA00030"/>
<dbReference type="UniPathway" id="UPA00358">
    <property type="reaction ID" value="UER00476"/>
</dbReference>
<dbReference type="Proteomes" id="UP000002193">
    <property type="component" value="Chromosome"/>
</dbReference>
<dbReference type="GO" id="GO:0005829">
    <property type="term" value="C:cytosol"/>
    <property type="evidence" value="ECO:0007669"/>
    <property type="project" value="TreeGrafter"/>
</dbReference>
<dbReference type="GO" id="GO:0008690">
    <property type="term" value="F:3-deoxy-manno-octulosonate cytidylyltransferase activity"/>
    <property type="evidence" value="ECO:0007669"/>
    <property type="project" value="UniProtKB-UniRule"/>
</dbReference>
<dbReference type="GO" id="GO:0033468">
    <property type="term" value="P:CMP-keto-3-deoxy-D-manno-octulosonic acid biosynthetic process"/>
    <property type="evidence" value="ECO:0007669"/>
    <property type="project" value="UniProtKB-UniRule"/>
</dbReference>
<dbReference type="GO" id="GO:0009103">
    <property type="term" value="P:lipopolysaccharide biosynthetic process"/>
    <property type="evidence" value="ECO:0007669"/>
    <property type="project" value="UniProtKB-UniRule"/>
</dbReference>
<dbReference type="CDD" id="cd02517">
    <property type="entry name" value="CMP-KDO-Synthetase"/>
    <property type="match status" value="1"/>
</dbReference>
<dbReference type="FunFam" id="3.90.550.10:FF:000011">
    <property type="entry name" value="3-deoxy-manno-octulosonate cytidylyltransferase"/>
    <property type="match status" value="1"/>
</dbReference>
<dbReference type="Gene3D" id="3.90.550.10">
    <property type="entry name" value="Spore Coat Polysaccharide Biosynthesis Protein SpsA, Chain A"/>
    <property type="match status" value="1"/>
</dbReference>
<dbReference type="HAMAP" id="MF_00057">
    <property type="entry name" value="KdsB"/>
    <property type="match status" value="1"/>
</dbReference>
<dbReference type="InterPro" id="IPR003329">
    <property type="entry name" value="Cytidylyl_trans"/>
</dbReference>
<dbReference type="InterPro" id="IPR004528">
    <property type="entry name" value="KdsB"/>
</dbReference>
<dbReference type="InterPro" id="IPR029044">
    <property type="entry name" value="Nucleotide-diphossugar_trans"/>
</dbReference>
<dbReference type="NCBIfam" id="TIGR00466">
    <property type="entry name" value="kdsB"/>
    <property type="match status" value="1"/>
</dbReference>
<dbReference type="NCBIfam" id="NF003950">
    <property type="entry name" value="PRK05450.1-3"/>
    <property type="match status" value="1"/>
</dbReference>
<dbReference type="NCBIfam" id="NF003952">
    <property type="entry name" value="PRK05450.1-5"/>
    <property type="match status" value="1"/>
</dbReference>
<dbReference type="PANTHER" id="PTHR42866">
    <property type="entry name" value="3-DEOXY-MANNO-OCTULOSONATE CYTIDYLYLTRANSFERASE"/>
    <property type="match status" value="1"/>
</dbReference>
<dbReference type="PANTHER" id="PTHR42866:SF2">
    <property type="entry name" value="3-DEOXY-MANNO-OCTULOSONATE CYTIDYLYLTRANSFERASE, MITOCHONDRIAL"/>
    <property type="match status" value="1"/>
</dbReference>
<dbReference type="Pfam" id="PF02348">
    <property type="entry name" value="CTP_transf_3"/>
    <property type="match status" value="1"/>
</dbReference>
<dbReference type="SUPFAM" id="SSF53448">
    <property type="entry name" value="Nucleotide-diphospho-sugar transferases"/>
    <property type="match status" value="1"/>
</dbReference>
<comment type="function">
    <text evidence="1">Activates KDO (a required 8-carbon sugar) for incorporation into bacterial lipopolysaccharide in Gram-negative bacteria.</text>
</comment>
<comment type="catalytic activity">
    <reaction evidence="1">
        <text>3-deoxy-alpha-D-manno-oct-2-ulosonate + CTP = CMP-3-deoxy-beta-D-manno-octulosonate + diphosphate</text>
        <dbReference type="Rhea" id="RHEA:23448"/>
        <dbReference type="ChEBI" id="CHEBI:33019"/>
        <dbReference type="ChEBI" id="CHEBI:37563"/>
        <dbReference type="ChEBI" id="CHEBI:85986"/>
        <dbReference type="ChEBI" id="CHEBI:85987"/>
        <dbReference type="EC" id="2.7.7.38"/>
    </reaction>
</comment>
<comment type="pathway">
    <text evidence="1">Nucleotide-sugar biosynthesis; CMP-3-deoxy-D-manno-octulosonate biosynthesis; CMP-3-deoxy-D-manno-octulosonate from 3-deoxy-D-manno-octulosonate and CTP: step 1/1.</text>
</comment>
<comment type="pathway">
    <text evidence="1">Bacterial outer membrane biogenesis; lipopolysaccharide biosynthesis.</text>
</comment>
<comment type="subcellular location">
    <subcellularLocation>
        <location evidence="1">Cytoplasm</location>
    </subcellularLocation>
</comment>
<comment type="similarity">
    <text evidence="1">Belongs to the KdsB family.</text>
</comment>
<feature type="chain" id="PRO_0000188497" description="3-deoxy-manno-octulosonate cytidylyltransferase">
    <location>
        <begin position="1"/>
        <end position="254"/>
    </location>
</feature>
<sequence>MKKQVFASKKVGVLPARWGSARFTGKPLASILGKSLIRRTYENINQSIALDKVIVATDDQRIMDHVLDFGGDCVLTSPECANGTERTAETISRYFPEAEIIVNIQGDEPCLQHTVVDALVRKLEEFPEIQIVTPVAKTTDSHEILTNQKVKCVFDKNGKALYFSRSPIPHILKKETPIYLHIGVYAFRRNALFNYIESSPTPLSQAEDLEQLRILEHGGSIHVCVVEAKSPSVDYPEDINKVEKYLTCHSSASF</sequence>
<keyword id="KW-0963">Cytoplasm</keyword>
<keyword id="KW-0448">Lipopolysaccharide biosynthesis</keyword>
<keyword id="KW-0548">Nucleotidyltransferase</keyword>
<keyword id="KW-0808">Transferase</keyword>
<organism>
    <name type="scientific">Chlamydia caviae (strain ATCC VR-813 / DSM 19441 / 03DC25 / GPIC)</name>
    <name type="common">Chlamydophila caviae</name>
    <dbReference type="NCBI Taxonomy" id="227941"/>
    <lineage>
        <taxon>Bacteria</taxon>
        <taxon>Pseudomonadati</taxon>
        <taxon>Chlamydiota</taxon>
        <taxon>Chlamydiia</taxon>
        <taxon>Chlamydiales</taxon>
        <taxon>Chlamydiaceae</taxon>
        <taxon>Chlamydia/Chlamydophila group</taxon>
        <taxon>Chlamydia</taxon>
    </lineage>
</organism>
<gene>
    <name evidence="1" type="primary">kdsB</name>
    <name type="ordered locus">CCA_00596</name>
</gene>
<evidence type="ECO:0000255" key="1">
    <source>
        <dbReference type="HAMAP-Rule" id="MF_00057"/>
    </source>
</evidence>
<protein>
    <recommendedName>
        <fullName evidence="1">3-deoxy-manno-octulosonate cytidylyltransferase</fullName>
        <ecNumber evidence="1">2.7.7.38</ecNumber>
    </recommendedName>
    <alternativeName>
        <fullName evidence="1">CMP-2-keto-3-deoxyoctulosonic acid synthase</fullName>
        <shortName evidence="1">CKS</shortName>
        <shortName evidence="1">CMP-KDO synthase</shortName>
    </alternativeName>
</protein>
<name>KDSB_CHLCV</name>
<accession>Q822T3</accession>